<name>PA21B_SHEEP</name>
<dbReference type="EC" id="3.1.1.4" evidence="3 4"/>
<dbReference type="SMR" id="P14419"/>
<dbReference type="STRING" id="9940.ENSOARP00000012902"/>
<dbReference type="PaxDb" id="9940-ENSOARP00000012902"/>
<dbReference type="Ensembl" id="ENSOART00215059386">
    <property type="protein sequence ID" value="ENSOARP00215031505"/>
    <property type="gene ID" value="ENSOARG00215035342"/>
</dbReference>
<dbReference type="Ensembl" id="ENSOART00220059918">
    <property type="protein sequence ID" value="ENSOARP00220032078"/>
    <property type="gene ID" value="ENSOARG00220036141"/>
</dbReference>
<dbReference type="Ensembl" id="ENSOART00225049400">
    <property type="protein sequence ID" value="ENSOARP00225024784"/>
    <property type="gene ID" value="ENSOARG00225029935"/>
</dbReference>
<dbReference type="eggNOG" id="KOG4087">
    <property type="taxonomic scope" value="Eukaryota"/>
</dbReference>
<dbReference type="Proteomes" id="UP000002356">
    <property type="component" value="Unplaced"/>
</dbReference>
<dbReference type="GO" id="GO:0005576">
    <property type="term" value="C:extracellular region"/>
    <property type="evidence" value="ECO:0007669"/>
    <property type="project" value="UniProtKB-SubCell"/>
</dbReference>
<dbReference type="GO" id="GO:0032052">
    <property type="term" value="F:bile acid binding"/>
    <property type="evidence" value="ECO:0000250"/>
    <property type="project" value="UniProtKB"/>
</dbReference>
<dbReference type="GO" id="GO:0005509">
    <property type="term" value="F:calcium ion binding"/>
    <property type="evidence" value="ECO:0007669"/>
    <property type="project" value="InterPro"/>
</dbReference>
<dbReference type="GO" id="GO:0047498">
    <property type="term" value="F:calcium-dependent phospholipase A2 activity"/>
    <property type="evidence" value="ECO:0000250"/>
    <property type="project" value="UniProtKB"/>
</dbReference>
<dbReference type="GO" id="GO:0005543">
    <property type="term" value="F:phospholipid binding"/>
    <property type="evidence" value="ECO:0007669"/>
    <property type="project" value="TreeGrafter"/>
</dbReference>
<dbReference type="GO" id="GO:0005102">
    <property type="term" value="F:signaling receptor binding"/>
    <property type="evidence" value="ECO:0007669"/>
    <property type="project" value="TreeGrafter"/>
</dbReference>
<dbReference type="GO" id="GO:0050482">
    <property type="term" value="P:arachidonate secretion"/>
    <property type="evidence" value="ECO:0007669"/>
    <property type="project" value="InterPro"/>
</dbReference>
<dbReference type="GO" id="GO:0006633">
    <property type="term" value="P:fatty acid biosynthetic process"/>
    <property type="evidence" value="ECO:0007669"/>
    <property type="project" value="TreeGrafter"/>
</dbReference>
<dbReference type="GO" id="GO:0016042">
    <property type="term" value="P:lipid catabolic process"/>
    <property type="evidence" value="ECO:0007669"/>
    <property type="project" value="InterPro"/>
</dbReference>
<dbReference type="GO" id="GO:0046471">
    <property type="term" value="P:phosphatidylglycerol metabolic process"/>
    <property type="evidence" value="ECO:0000250"/>
    <property type="project" value="UniProtKB"/>
</dbReference>
<dbReference type="GO" id="GO:0048146">
    <property type="term" value="P:positive regulation of fibroblast proliferation"/>
    <property type="evidence" value="ECO:0007669"/>
    <property type="project" value="TreeGrafter"/>
</dbReference>
<dbReference type="GO" id="GO:1904635">
    <property type="term" value="P:positive regulation of podocyte apoptotic process"/>
    <property type="evidence" value="ECO:0000250"/>
    <property type="project" value="UniProtKB"/>
</dbReference>
<dbReference type="CDD" id="cd00125">
    <property type="entry name" value="PLA2c"/>
    <property type="match status" value="1"/>
</dbReference>
<dbReference type="FunFam" id="1.20.90.10:FF:000011">
    <property type="entry name" value="Phospholipase A(2)"/>
    <property type="match status" value="1"/>
</dbReference>
<dbReference type="Gene3D" id="1.20.90.10">
    <property type="entry name" value="Phospholipase A2 domain"/>
    <property type="match status" value="1"/>
</dbReference>
<dbReference type="InterPro" id="IPR001211">
    <property type="entry name" value="PLipase_A2"/>
</dbReference>
<dbReference type="InterPro" id="IPR033112">
    <property type="entry name" value="PLipase_A2_Asp_AS"/>
</dbReference>
<dbReference type="InterPro" id="IPR016090">
    <property type="entry name" value="PLipase_A2_dom"/>
</dbReference>
<dbReference type="InterPro" id="IPR036444">
    <property type="entry name" value="PLipase_A2_dom_sf"/>
</dbReference>
<dbReference type="InterPro" id="IPR033113">
    <property type="entry name" value="PLipase_A2_His_AS"/>
</dbReference>
<dbReference type="PANTHER" id="PTHR11716:SF94">
    <property type="entry name" value="PHOSPHOLIPASE A2"/>
    <property type="match status" value="1"/>
</dbReference>
<dbReference type="PANTHER" id="PTHR11716">
    <property type="entry name" value="PHOSPHOLIPASE A2 FAMILY MEMBER"/>
    <property type="match status" value="1"/>
</dbReference>
<dbReference type="Pfam" id="PF00068">
    <property type="entry name" value="Phospholip_A2_1"/>
    <property type="match status" value="1"/>
</dbReference>
<dbReference type="PRINTS" id="PR00389">
    <property type="entry name" value="PHPHLIPASEA2"/>
</dbReference>
<dbReference type="SMART" id="SM00085">
    <property type="entry name" value="PA2c"/>
    <property type="match status" value="1"/>
</dbReference>
<dbReference type="SUPFAM" id="SSF48619">
    <property type="entry name" value="Phospholipase A2, PLA2"/>
    <property type="match status" value="1"/>
</dbReference>
<dbReference type="PROSITE" id="PS00119">
    <property type="entry name" value="PA2_ASP"/>
    <property type="match status" value="1"/>
</dbReference>
<dbReference type="PROSITE" id="PS00118">
    <property type="entry name" value="PA2_HIS"/>
    <property type="match status" value="1"/>
</dbReference>
<proteinExistence type="evidence at protein level"/>
<reference key="1">
    <citation type="journal article" date="1988" name="Recl. Trav. Chim. Pays-Bas">
        <title>The primary structure and some kinetic properties of phospholipase A2 from sheep pancreas.</title>
        <authorList>
            <person name="Verheij H.M."/>
            <person name="Raykova D."/>
            <person name="Dijkman R."/>
            <person name="Lenting H.B.M."/>
            <person name="de Haas G.H."/>
        </authorList>
    </citation>
    <scope>PROTEIN SEQUENCE</scope>
    <source>
        <tissue>Pancreas</tissue>
    </source>
</reference>
<keyword id="KW-0068">Autocatalytic cleavage</keyword>
<keyword id="KW-0106">Calcium</keyword>
<keyword id="KW-0903">Direct protein sequencing</keyword>
<keyword id="KW-1015">Disulfide bond</keyword>
<keyword id="KW-0378">Hydrolase</keyword>
<keyword id="KW-0443">Lipid metabolism</keyword>
<keyword id="KW-0479">Metal-binding</keyword>
<keyword id="KW-1208">Phospholipid metabolism</keyword>
<keyword id="KW-1185">Reference proteome</keyword>
<keyword id="KW-0964">Secreted</keyword>
<keyword id="KW-0865">Zymogen</keyword>
<protein>
    <recommendedName>
        <fullName>Phospholipase A2</fullName>
        <ecNumber evidence="3 4">3.1.1.4</ecNumber>
    </recommendedName>
    <alternativeName>
        <fullName>Group IB phospholipase A2</fullName>
    </alternativeName>
    <alternativeName>
        <fullName>Phosphatidylcholine 2-acylhydrolase 1B</fullName>
    </alternativeName>
</protein>
<gene>
    <name type="primary">PLA2G1B</name>
</gene>
<comment type="function">
    <text evidence="3 4 5">Secretory calcium-dependent phospholipase A2 that primarily targets dietary phospholipids in the intestinal tract. Hydrolyzes the ester bond of the fatty acyl group attached at sn-2 position of phospholipids (phospholipase A2 activity) with preference for phosphatidylethanolamines and phosphatidylglycerols over phosphatidylcholines. May play a role in the biosynthesis of N-acyl ethanolamines that regulate energy metabolism and inflammation in the intestinal tract. Hydrolyzes N-acyl phosphatidylethanolamines to N-acyl lysophosphatidylethanolamines, which are further cleaved by a lysophospholipase D to release N-acyl ethanolamines (By similarity). May act in an autocrine and paracrine manner (By similarity). Has anti-helminth activity in a process regulated by gut microbiota. Upon helminth infection of intestinal epithelia, directly affects phosphatidylethanolamine contents in the membrane of helminth larvae, likely controlling an array of phospholipid-mediated cellular processes such as membrane fusion and cell division while providing for better immune recognition, ultimately reducing larvae integrity and infectivity (By similarity).</text>
</comment>
<comment type="catalytic activity">
    <reaction evidence="3 4 6 7">
        <text>a 1,2-diacyl-sn-glycero-3-phosphocholine + H2O = a 1-acyl-sn-glycero-3-phosphocholine + a fatty acid + H(+)</text>
        <dbReference type="Rhea" id="RHEA:15801"/>
        <dbReference type="ChEBI" id="CHEBI:15377"/>
        <dbReference type="ChEBI" id="CHEBI:15378"/>
        <dbReference type="ChEBI" id="CHEBI:28868"/>
        <dbReference type="ChEBI" id="CHEBI:57643"/>
        <dbReference type="ChEBI" id="CHEBI:58168"/>
        <dbReference type="EC" id="3.1.1.4"/>
    </reaction>
</comment>
<comment type="catalytic activity">
    <reaction evidence="3">
        <text>1,2-ditetradecanoyl-sn-glycero-3-phosphocholine + H2O = 1-tetradecanoyl-sn-glycero-3-phosphocholine + tetradecanoate + H(+)</text>
        <dbReference type="Rhea" id="RHEA:54456"/>
        <dbReference type="ChEBI" id="CHEBI:15377"/>
        <dbReference type="ChEBI" id="CHEBI:15378"/>
        <dbReference type="ChEBI" id="CHEBI:30807"/>
        <dbReference type="ChEBI" id="CHEBI:45240"/>
        <dbReference type="ChEBI" id="CHEBI:64489"/>
    </reaction>
</comment>
<comment type="catalytic activity">
    <reaction evidence="4">
        <text>1,2-dihexadecanoyl-sn-glycero-3-phosphocholine + H2O = 1-hexadecanoyl-sn-glycero-3-phosphocholine + hexadecanoate + H(+)</text>
        <dbReference type="Rhea" id="RHEA:41223"/>
        <dbReference type="ChEBI" id="CHEBI:7896"/>
        <dbReference type="ChEBI" id="CHEBI:15377"/>
        <dbReference type="ChEBI" id="CHEBI:15378"/>
        <dbReference type="ChEBI" id="CHEBI:72998"/>
        <dbReference type="ChEBI" id="CHEBI:72999"/>
    </reaction>
    <physiologicalReaction direction="left-to-right" evidence="4">
        <dbReference type="Rhea" id="RHEA:41224"/>
    </physiologicalReaction>
</comment>
<comment type="catalytic activity">
    <reaction evidence="3">
        <text>1-hexadecanoyl-2-(9Z-octadecenoyl)-sn-glycero-3-phosphocholine + H2O = 1-hexadecanoyl-sn-glycero-3-phosphocholine + (9Z)-octadecenoate + H(+)</text>
        <dbReference type="Rhea" id="RHEA:38779"/>
        <dbReference type="ChEBI" id="CHEBI:15377"/>
        <dbReference type="ChEBI" id="CHEBI:15378"/>
        <dbReference type="ChEBI" id="CHEBI:30823"/>
        <dbReference type="ChEBI" id="CHEBI:72998"/>
        <dbReference type="ChEBI" id="CHEBI:73001"/>
    </reaction>
    <physiologicalReaction direction="left-to-right" evidence="3">
        <dbReference type="Rhea" id="RHEA:38780"/>
    </physiologicalReaction>
</comment>
<comment type="catalytic activity">
    <reaction evidence="4">
        <text>1-hexadecanoyl-2-(5Z,8Z,11Z,14Z-eicosatetraenoyl)-sn-glycero-3-phosphocholine + H2O = 1-hexadecanoyl-sn-glycero-3-phosphocholine + (5Z,8Z,11Z,14Z)-eicosatetraenoate + H(+)</text>
        <dbReference type="Rhea" id="RHEA:40427"/>
        <dbReference type="ChEBI" id="CHEBI:15377"/>
        <dbReference type="ChEBI" id="CHEBI:15378"/>
        <dbReference type="ChEBI" id="CHEBI:32395"/>
        <dbReference type="ChEBI" id="CHEBI:72998"/>
        <dbReference type="ChEBI" id="CHEBI:73003"/>
    </reaction>
    <physiologicalReaction direction="left-to-right" evidence="4">
        <dbReference type="Rhea" id="RHEA:40428"/>
    </physiologicalReaction>
</comment>
<comment type="catalytic activity">
    <reaction evidence="3">
        <text>1-hexadecanoyl-2-(9Z-octadecenoyl)-sn-glycero-3-phospho-(1'-sn-glycerol) + H2O = 1-hexadecanoyl-sn-glycero-3-phospho-(1'-sn-glycerol) + (9Z)-octadecenoate + H(+)</text>
        <dbReference type="Rhea" id="RHEA:40919"/>
        <dbReference type="ChEBI" id="CHEBI:15377"/>
        <dbReference type="ChEBI" id="CHEBI:15378"/>
        <dbReference type="ChEBI" id="CHEBI:30823"/>
        <dbReference type="ChEBI" id="CHEBI:72841"/>
        <dbReference type="ChEBI" id="CHEBI:75158"/>
    </reaction>
    <physiologicalReaction direction="left-to-right" evidence="3">
        <dbReference type="Rhea" id="RHEA:40920"/>
    </physiologicalReaction>
</comment>
<comment type="catalytic activity">
    <reaction evidence="4">
        <text>N-hexadecanoyl-1,2-di-(9Z-octadecenoyl)-sn-glycero-3-phosphoethanolamine + H2O = N-hexadecanoyl-1-(9Z-octadecenoyl)-sn-glycero-3-phosphoethanolamine + (9Z)-octadecenoate + H(+)</text>
        <dbReference type="Rhea" id="RHEA:45424"/>
        <dbReference type="ChEBI" id="CHEBI:15377"/>
        <dbReference type="ChEBI" id="CHEBI:15378"/>
        <dbReference type="ChEBI" id="CHEBI:30823"/>
        <dbReference type="ChEBI" id="CHEBI:78097"/>
        <dbReference type="ChEBI" id="CHEBI:85217"/>
    </reaction>
    <physiologicalReaction direction="left-to-right" evidence="4">
        <dbReference type="Rhea" id="RHEA:45425"/>
    </physiologicalReaction>
</comment>
<comment type="catalytic activity">
    <reaction evidence="4">
        <text>1-hexadecanoyl-2-(9Z,12Z-octadecadienoyl)-sn-glycero-3-phosphoethanolamine + H2O = 1-hexadecanoyl-sn-glycero-3-phosphoethanolamine + (9Z,12Z)-octadecadienoate + H(+)</text>
        <dbReference type="Rhea" id="RHEA:40815"/>
        <dbReference type="ChEBI" id="CHEBI:15377"/>
        <dbReference type="ChEBI" id="CHEBI:15378"/>
        <dbReference type="ChEBI" id="CHEBI:30245"/>
        <dbReference type="ChEBI" id="CHEBI:73004"/>
        <dbReference type="ChEBI" id="CHEBI:73008"/>
    </reaction>
    <physiologicalReaction direction="left-to-right" evidence="4">
        <dbReference type="Rhea" id="RHEA:40816"/>
    </physiologicalReaction>
</comment>
<comment type="catalytic activity">
    <reaction evidence="4">
        <text>N,1-dihexadecanoyl-2-(9Z,12Z-octadecadienoyl)-sn-glycero-3-phosphoethanolamine + H2O = N,1-dihexadecanoyl-sn-glycero-3-phosphoethanolamine + (9Z,12Z)-octadecadienoate + H(+)</text>
        <dbReference type="Rhea" id="RHEA:56424"/>
        <dbReference type="ChEBI" id="CHEBI:15377"/>
        <dbReference type="ChEBI" id="CHEBI:15378"/>
        <dbReference type="ChEBI" id="CHEBI:30245"/>
        <dbReference type="ChEBI" id="CHEBI:85334"/>
        <dbReference type="ChEBI" id="CHEBI:85335"/>
    </reaction>
    <physiologicalReaction direction="left-to-right" evidence="4">
        <dbReference type="Rhea" id="RHEA:56425"/>
    </physiologicalReaction>
</comment>
<comment type="cofactor">
    <cofactor evidence="2">
        <name>Ca(2+)</name>
        <dbReference type="ChEBI" id="CHEBI:29108"/>
    </cofactor>
    <text evidence="2">Binds 1 Ca(2+) ion per subunit.</text>
</comment>
<comment type="subunit">
    <text evidence="1">Monomer or homodimer.</text>
</comment>
<comment type="subcellular location">
    <subcellularLocation>
        <location evidence="3">Secreted</location>
    </subcellularLocation>
    <text evidence="3">Secreted from pancreatic acinar cells in its inactive form.</text>
</comment>
<comment type="PTM">
    <text evidence="3">Activated by trypsin cleavage in the duodenum. Can also be activated by thrombin or autocatalytically.</text>
</comment>
<comment type="similarity">
    <text evidence="8">Belongs to the phospholipase A2 family.</text>
</comment>
<feature type="chain" id="PRO_0000161588" description="Phospholipase A2">
    <location>
        <begin position="1"/>
        <end position="123"/>
    </location>
</feature>
<feature type="active site" evidence="2">
    <location>
        <position position="48"/>
    </location>
</feature>
<feature type="active site" evidence="2">
    <location>
        <position position="99"/>
    </location>
</feature>
<feature type="binding site" evidence="2">
    <location>
        <position position="28"/>
    </location>
    <ligand>
        <name>Ca(2+)</name>
        <dbReference type="ChEBI" id="CHEBI:29108"/>
    </ligand>
</feature>
<feature type="binding site" evidence="2">
    <location>
        <position position="30"/>
    </location>
    <ligand>
        <name>Ca(2+)</name>
        <dbReference type="ChEBI" id="CHEBI:29108"/>
    </ligand>
</feature>
<feature type="binding site" evidence="2">
    <location>
        <position position="32"/>
    </location>
    <ligand>
        <name>Ca(2+)</name>
        <dbReference type="ChEBI" id="CHEBI:29108"/>
    </ligand>
</feature>
<feature type="binding site" evidence="2">
    <location>
        <position position="49"/>
    </location>
    <ligand>
        <name>Ca(2+)</name>
        <dbReference type="ChEBI" id="CHEBI:29108"/>
    </ligand>
</feature>
<feature type="disulfide bond" evidence="2">
    <location>
        <begin position="11"/>
        <end position="77"/>
    </location>
</feature>
<feature type="disulfide bond" evidence="2">
    <location>
        <begin position="27"/>
        <end position="123"/>
    </location>
</feature>
<feature type="disulfide bond" evidence="2">
    <location>
        <begin position="29"/>
        <end position="45"/>
    </location>
</feature>
<feature type="disulfide bond" evidence="2">
    <location>
        <begin position="44"/>
        <end position="105"/>
    </location>
</feature>
<feature type="disulfide bond" evidence="2">
    <location>
        <begin position="51"/>
        <end position="98"/>
    </location>
</feature>
<feature type="disulfide bond" evidence="2">
    <location>
        <begin position="61"/>
        <end position="91"/>
    </location>
</feature>
<feature type="disulfide bond" evidence="2">
    <location>
        <begin position="84"/>
        <end position="96"/>
    </location>
</feature>
<sequence>ALWQFNGMIKCKIPSSEPLLDFNNYGCYCGLGGSGTPVDDLDRCCQTHDNCYKQAKKLDSCKVLVDNPYTNSYSYSCSNKQITCSSENNACEAFICNCDRNAAICFSEVPYNNEHKNLDKKYC</sequence>
<accession>P14419</accession>
<evidence type="ECO:0000250" key="1">
    <source>
        <dbReference type="UniProtKB" id="P00592"/>
    </source>
</evidence>
<evidence type="ECO:0000250" key="2">
    <source>
        <dbReference type="UniProtKB" id="P00593"/>
    </source>
</evidence>
<evidence type="ECO:0000250" key="3">
    <source>
        <dbReference type="UniProtKB" id="P04054"/>
    </source>
</evidence>
<evidence type="ECO:0000250" key="4">
    <source>
        <dbReference type="UniProtKB" id="P04055"/>
    </source>
</evidence>
<evidence type="ECO:0000250" key="5">
    <source>
        <dbReference type="UniProtKB" id="Q9Z0Y2"/>
    </source>
</evidence>
<evidence type="ECO:0000255" key="6">
    <source>
        <dbReference type="PROSITE-ProRule" id="PRU10035"/>
    </source>
</evidence>
<evidence type="ECO:0000255" key="7">
    <source>
        <dbReference type="PROSITE-ProRule" id="PRU10036"/>
    </source>
</evidence>
<evidence type="ECO:0000305" key="8"/>
<organism>
    <name type="scientific">Ovis aries</name>
    <name type="common">Sheep</name>
    <dbReference type="NCBI Taxonomy" id="9940"/>
    <lineage>
        <taxon>Eukaryota</taxon>
        <taxon>Metazoa</taxon>
        <taxon>Chordata</taxon>
        <taxon>Craniata</taxon>
        <taxon>Vertebrata</taxon>
        <taxon>Euteleostomi</taxon>
        <taxon>Mammalia</taxon>
        <taxon>Eutheria</taxon>
        <taxon>Laurasiatheria</taxon>
        <taxon>Artiodactyla</taxon>
        <taxon>Ruminantia</taxon>
        <taxon>Pecora</taxon>
        <taxon>Bovidae</taxon>
        <taxon>Caprinae</taxon>
        <taxon>Ovis</taxon>
    </lineage>
</organism>